<feature type="chain" id="PRO_1000056857" description="Nucleotide-binding protein Sputcn32_0712">
    <location>
        <begin position="1"/>
        <end position="284"/>
    </location>
</feature>
<feature type="binding site" evidence="1">
    <location>
        <begin position="8"/>
        <end position="15"/>
    </location>
    <ligand>
        <name>ATP</name>
        <dbReference type="ChEBI" id="CHEBI:30616"/>
    </ligand>
</feature>
<feature type="binding site" evidence="1">
    <location>
        <begin position="56"/>
        <end position="59"/>
    </location>
    <ligand>
        <name>GTP</name>
        <dbReference type="ChEBI" id="CHEBI:37565"/>
    </ligand>
</feature>
<protein>
    <recommendedName>
        <fullName evidence="1">Nucleotide-binding protein Sputcn32_0712</fullName>
    </recommendedName>
</protein>
<comment type="function">
    <text evidence="1">Displays ATPase and GTPase activities.</text>
</comment>
<comment type="similarity">
    <text evidence="1">Belongs to the RapZ-like family.</text>
</comment>
<keyword id="KW-0067">ATP-binding</keyword>
<keyword id="KW-0342">GTP-binding</keyword>
<keyword id="KW-0547">Nucleotide-binding</keyword>
<organism>
    <name type="scientific">Shewanella putrefaciens (strain CN-32 / ATCC BAA-453)</name>
    <dbReference type="NCBI Taxonomy" id="319224"/>
    <lineage>
        <taxon>Bacteria</taxon>
        <taxon>Pseudomonadati</taxon>
        <taxon>Pseudomonadota</taxon>
        <taxon>Gammaproteobacteria</taxon>
        <taxon>Alteromonadales</taxon>
        <taxon>Shewanellaceae</taxon>
        <taxon>Shewanella</taxon>
    </lineage>
</organism>
<sequence length="284" mass="32244">MKLVIVSGRSGSGKSVALRVLEDLGYYCVDNLPLPLIGSLLEQLKGSNDLVAISVDVRNMPEQDKVLVQQLSNLPAGTEITSFFLNSSDKVLLKRYSETRRLHPLSKSRVSLQEAIKLEGKLLEPMSKLVDHYIDTSNLNIYDLSDQVRQILLGSVDKELVIYFESFGFKNGMPTEADFMFDVRFLPNPHWELALRPLTGLDEPVAEFLNRQPLVNKFIWQIENLLETWLPHLERNNRSYLTIAIGCTGGQHRSVYVAEQLAKRFSNGKHKVNVRHRELDNAKA</sequence>
<evidence type="ECO:0000255" key="1">
    <source>
        <dbReference type="HAMAP-Rule" id="MF_00636"/>
    </source>
</evidence>
<accession>A4Y3A9</accession>
<gene>
    <name type="ordered locus">Sputcn32_0712</name>
</gene>
<name>Y712_SHEPC</name>
<reference key="1">
    <citation type="submission" date="2007-04" db="EMBL/GenBank/DDBJ databases">
        <title>Complete sequence of Shewanella putrefaciens CN-32.</title>
        <authorList>
            <consortium name="US DOE Joint Genome Institute"/>
            <person name="Copeland A."/>
            <person name="Lucas S."/>
            <person name="Lapidus A."/>
            <person name="Barry K."/>
            <person name="Detter J.C."/>
            <person name="Glavina del Rio T."/>
            <person name="Hammon N."/>
            <person name="Israni S."/>
            <person name="Dalin E."/>
            <person name="Tice H."/>
            <person name="Pitluck S."/>
            <person name="Chain P."/>
            <person name="Malfatti S."/>
            <person name="Shin M."/>
            <person name="Vergez L."/>
            <person name="Schmutz J."/>
            <person name="Larimer F."/>
            <person name="Land M."/>
            <person name="Hauser L."/>
            <person name="Kyrpides N."/>
            <person name="Mikhailova N."/>
            <person name="Romine M.F."/>
            <person name="Fredrickson J."/>
            <person name="Tiedje J."/>
            <person name="Richardson P."/>
        </authorList>
    </citation>
    <scope>NUCLEOTIDE SEQUENCE [LARGE SCALE GENOMIC DNA]</scope>
    <source>
        <strain>CN-32 / ATCC BAA-453</strain>
    </source>
</reference>
<proteinExistence type="inferred from homology"/>
<dbReference type="EMBL" id="CP000681">
    <property type="protein sequence ID" value="ABP74442.1"/>
    <property type="molecule type" value="Genomic_DNA"/>
</dbReference>
<dbReference type="SMR" id="A4Y3A9"/>
<dbReference type="STRING" id="319224.Sputcn32_0712"/>
<dbReference type="KEGG" id="spc:Sputcn32_0712"/>
<dbReference type="eggNOG" id="COG1660">
    <property type="taxonomic scope" value="Bacteria"/>
</dbReference>
<dbReference type="HOGENOM" id="CLU_059558_1_1_6"/>
<dbReference type="GO" id="GO:0005524">
    <property type="term" value="F:ATP binding"/>
    <property type="evidence" value="ECO:0007669"/>
    <property type="project" value="UniProtKB-UniRule"/>
</dbReference>
<dbReference type="GO" id="GO:0005525">
    <property type="term" value="F:GTP binding"/>
    <property type="evidence" value="ECO:0007669"/>
    <property type="project" value="UniProtKB-UniRule"/>
</dbReference>
<dbReference type="HAMAP" id="MF_00636">
    <property type="entry name" value="RapZ_like"/>
    <property type="match status" value="1"/>
</dbReference>
<dbReference type="InterPro" id="IPR027417">
    <property type="entry name" value="P-loop_NTPase"/>
</dbReference>
<dbReference type="InterPro" id="IPR005337">
    <property type="entry name" value="RapZ-like"/>
</dbReference>
<dbReference type="InterPro" id="IPR053930">
    <property type="entry name" value="RapZ-like_N"/>
</dbReference>
<dbReference type="InterPro" id="IPR053931">
    <property type="entry name" value="RapZ_C"/>
</dbReference>
<dbReference type="NCBIfam" id="NF003828">
    <property type="entry name" value="PRK05416.1"/>
    <property type="match status" value="1"/>
</dbReference>
<dbReference type="PANTHER" id="PTHR30448">
    <property type="entry name" value="RNASE ADAPTER PROTEIN RAPZ"/>
    <property type="match status" value="1"/>
</dbReference>
<dbReference type="PANTHER" id="PTHR30448:SF0">
    <property type="entry name" value="RNASE ADAPTER PROTEIN RAPZ"/>
    <property type="match status" value="1"/>
</dbReference>
<dbReference type="Pfam" id="PF22740">
    <property type="entry name" value="PapZ_C"/>
    <property type="match status" value="1"/>
</dbReference>
<dbReference type="Pfam" id="PF03668">
    <property type="entry name" value="RapZ-like_N"/>
    <property type="match status" value="1"/>
</dbReference>
<dbReference type="PIRSF" id="PIRSF005052">
    <property type="entry name" value="P-loopkin"/>
    <property type="match status" value="1"/>
</dbReference>
<dbReference type="SUPFAM" id="SSF52540">
    <property type="entry name" value="P-loop containing nucleoside triphosphate hydrolases"/>
    <property type="match status" value="1"/>
</dbReference>